<reference key="1">
    <citation type="journal article" date="2007" name="PLoS ONE">
        <title>The complete genome sequence and analysis of the Epsilonproteobacterium Arcobacter butzleri.</title>
        <authorList>
            <person name="Miller W.G."/>
            <person name="Parker C.T."/>
            <person name="Rubenfield M."/>
            <person name="Mendz G.L."/>
            <person name="Woesten M.M.S.M."/>
            <person name="Ussery D.W."/>
            <person name="Stolz J.F."/>
            <person name="Binnewies T.T."/>
            <person name="Hallin P.F."/>
            <person name="Wang G."/>
            <person name="Malek J.A."/>
            <person name="Rogosin A."/>
            <person name="Stanker L.H."/>
            <person name="Mandrell R.E."/>
        </authorList>
    </citation>
    <scope>NUCLEOTIDE SEQUENCE [LARGE SCALE GENOMIC DNA]</scope>
    <source>
        <strain>RM4018</strain>
    </source>
</reference>
<organism>
    <name type="scientific">Aliarcobacter butzleri (strain RM4018)</name>
    <name type="common">Arcobacter butzleri</name>
    <dbReference type="NCBI Taxonomy" id="367737"/>
    <lineage>
        <taxon>Bacteria</taxon>
        <taxon>Pseudomonadati</taxon>
        <taxon>Campylobacterota</taxon>
        <taxon>Epsilonproteobacteria</taxon>
        <taxon>Campylobacterales</taxon>
        <taxon>Arcobacteraceae</taxon>
        <taxon>Aliarcobacter</taxon>
    </lineage>
</organism>
<evidence type="ECO:0000255" key="1">
    <source>
        <dbReference type="HAMAP-Rule" id="MF_00435"/>
    </source>
</evidence>
<evidence type="ECO:0000255" key="2">
    <source>
        <dbReference type="PROSITE-ProRule" id="PRU01197"/>
    </source>
</evidence>
<evidence type="ECO:0000255" key="3">
    <source>
        <dbReference type="PROSITE-ProRule" id="PRU01198"/>
    </source>
</evidence>
<dbReference type="EC" id="1.1.1.86" evidence="1"/>
<dbReference type="EMBL" id="CP000361">
    <property type="protein sequence ID" value="ABV66512.1"/>
    <property type="molecule type" value="Genomic_DNA"/>
</dbReference>
<dbReference type="SMR" id="A8ERD8"/>
<dbReference type="STRING" id="367737.Abu_0237"/>
<dbReference type="KEGG" id="abu:Abu_0237"/>
<dbReference type="eggNOG" id="COG0059">
    <property type="taxonomic scope" value="Bacteria"/>
</dbReference>
<dbReference type="HOGENOM" id="CLU_033821_0_1_7"/>
<dbReference type="UniPathway" id="UPA00047">
    <property type="reaction ID" value="UER00056"/>
</dbReference>
<dbReference type="UniPathway" id="UPA00049">
    <property type="reaction ID" value="UER00060"/>
</dbReference>
<dbReference type="Proteomes" id="UP000001136">
    <property type="component" value="Chromosome"/>
</dbReference>
<dbReference type="GO" id="GO:0005829">
    <property type="term" value="C:cytosol"/>
    <property type="evidence" value="ECO:0007669"/>
    <property type="project" value="TreeGrafter"/>
</dbReference>
<dbReference type="GO" id="GO:0004455">
    <property type="term" value="F:ketol-acid reductoisomerase activity"/>
    <property type="evidence" value="ECO:0007669"/>
    <property type="project" value="UniProtKB-UniRule"/>
</dbReference>
<dbReference type="GO" id="GO:0000287">
    <property type="term" value="F:magnesium ion binding"/>
    <property type="evidence" value="ECO:0007669"/>
    <property type="project" value="UniProtKB-UniRule"/>
</dbReference>
<dbReference type="GO" id="GO:0050661">
    <property type="term" value="F:NADP binding"/>
    <property type="evidence" value="ECO:0007669"/>
    <property type="project" value="InterPro"/>
</dbReference>
<dbReference type="GO" id="GO:0009097">
    <property type="term" value="P:isoleucine biosynthetic process"/>
    <property type="evidence" value="ECO:0007669"/>
    <property type="project" value="UniProtKB-UniRule"/>
</dbReference>
<dbReference type="GO" id="GO:0009099">
    <property type="term" value="P:L-valine biosynthetic process"/>
    <property type="evidence" value="ECO:0007669"/>
    <property type="project" value="UniProtKB-UniRule"/>
</dbReference>
<dbReference type="FunFam" id="3.40.50.720:FF:000023">
    <property type="entry name" value="Ketol-acid reductoisomerase (NADP(+))"/>
    <property type="match status" value="1"/>
</dbReference>
<dbReference type="Gene3D" id="6.10.240.10">
    <property type="match status" value="1"/>
</dbReference>
<dbReference type="Gene3D" id="3.40.50.720">
    <property type="entry name" value="NAD(P)-binding Rossmann-like Domain"/>
    <property type="match status" value="1"/>
</dbReference>
<dbReference type="HAMAP" id="MF_00435">
    <property type="entry name" value="IlvC"/>
    <property type="match status" value="1"/>
</dbReference>
<dbReference type="InterPro" id="IPR008927">
    <property type="entry name" value="6-PGluconate_DH-like_C_sf"/>
</dbReference>
<dbReference type="InterPro" id="IPR013023">
    <property type="entry name" value="KARI"/>
</dbReference>
<dbReference type="InterPro" id="IPR000506">
    <property type="entry name" value="KARI_C"/>
</dbReference>
<dbReference type="InterPro" id="IPR013116">
    <property type="entry name" value="KARI_N"/>
</dbReference>
<dbReference type="InterPro" id="IPR014359">
    <property type="entry name" value="KARI_prok"/>
</dbReference>
<dbReference type="InterPro" id="IPR036291">
    <property type="entry name" value="NAD(P)-bd_dom_sf"/>
</dbReference>
<dbReference type="NCBIfam" id="TIGR00465">
    <property type="entry name" value="ilvC"/>
    <property type="match status" value="1"/>
</dbReference>
<dbReference type="NCBIfam" id="NF004017">
    <property type="entry name" value="PRK05479.1"/>
    <property type="match status" value="1"/>
</dbReference>
<dbReference type="NCBIfam" id="NF009940">
    <property type="entry name" value="PRK13403.1"/>
    <property type="match status" value="1"/>
</dbReference>
<dbReference type="PANTHER" id="PTHR21371">
    <property type="entry name" value="KETOL-ACID REDUCTOISOMERASE, MITOCHONDRIAL"/>
    <property type="match status" value="1"/>
</dbReference>
<dbReference type="PANTHER" id="PTHR21371:SF1">
    <property type="entry name" value="KETOL-ACID REDUCTOISOMERASE, MITOCHONDRIAL"/>
    <property type="match status" value="1"/>
</dbReference>
<dbReference type="Pfam" id="PF01450">
    <property type="entry name" value="KARI_C"/>
    <property type="match status" value="1"/>
</dbReference>
<dbReference type="Pfam" id="PF07991">
    <property type="entry name" value="KARI_N"/>
    <property type="match status" value="1"/>
</dbReference>
<dbReference type="PIRSF" id="PIRSF000116">
    <property type="entry name" value="IlvC_gammaproteo"/>
    <property type="match status" value="1"/>
</dbReference>
<dbReference type="SUPFAM" id="SSF48179">
    <property type="entry name" value="6-phosphogluconate dehydrogenase C-terminal domain-like"/>
    <property type="match status" value="1"/>
</dbReference>
<dbReference type="SUPFAM" id="SSF51735">
    <property type="entry name" value="NAD(P)-binding Rossmann-fold domains"/>
    <property type="match status" value="1"/>
</dbReference>
<dbReference type="PROSITE" id="PS51851">
    <property type="entry name" value="KARI_C"/>
    <property type="match status" value="1"/>
</dbReference>
<dbReference type="PROSITE" id="PS51850">
    <property type="entry name" value="KARI_N"/>
    <property type="match status" value="1"/>
</dbReference>
<comment type="function">
    <text evidence="1">Involved in the biosynthesis of branched-chain amino acids (BCAA). Catalyzes an alkyl-migration followed by a ketol-acid reduction of (S)-2-acetolactate (S2AL) to yield (R)-2,3-dihydroxy-isovalerate. In the isomerase reaction, S2AL is rearranged via a Mg-dependent methyl migration to produce 3-hydroxy-3-methyl-2-ketobutyrate (HMKB). In the reductase reaction, this 2-ketoacid undergoes a metal-dependent reduction by NADPH to yield (R)-2,3-dihydroxy-isovalerate.</text>
</comment>
<comment type="catalytic activity">
    <reaction evidence="1">
        <text>(2R)-2,3-dihydroxy-3-methylbutanoate + NADP(+) = (2S)-2-acetolactate + NADPH + H(+)</text>
        <dbReference type="Rhea" id="RHEA:22068"/>
        <dbReference type="ChEBI" id="CHEBI:15378"/>
        <dbReference type="ChEBI" id="CHEBI:49072"/>
        <dbReference type="ChEBI" id="CHEBI:57783"/>
        <dbReference type="ChEBI" id="CHEBI:58349"/>
        <dbReference type="ChEBI" id="CHEBI:58476"/>
        <dbReference type="EC" id="1.1.1.86"/>
    </reaction>
</comment>
<comment type="catalytic activity">
    <reaction evidence="1">
        <text>(2R,3R)-2,3-dihydroxy-3-methylpentanoate + NADP(+) = (S)-2-ethyl-2-hydroxy-3-oxobutanoate + NADPH + H(+)</text>
        <dbReference type="Rhea" id="RHEA:13493"/>
        <dbReference type="ChEBI" id="CHEBI:15378"/>
        <dbReference type="ChEBI" id="CHEBI:49256"/>
        <dbReference type="ChEBI" id="CHEBI:49258"/>
        <dbReference type="ChEBI" id="CHEBI:57783"/>
        <dbReference type="ChEBI" id="CHEBI:58349"/>
        <dbReference type="EC" id="1.1.1.86"/>
    </reaction>
</comment>
<comment type="cofactor">
    <cofactor evidence="1">
        <name>Mg(2+)</name>
        <dbReference type="ChEBI" id="CHEBI:18420"/>
    </cofactor>
    <text evidence="1">Binds 2 magnesium ions per subunit.</text>
</comment>
<comment type="pathway">
    <text evidence="1">Amino-acid biosynthesis; L-isoleucine biosynthesis; L-isoleucine from 2-oxobutanoate: step 2/4.</text>
</comment>
<comment type="pathway">
    <text evidence="1">Amino-acid biosynthesis; L-valine biosynthesis; L-valine from pyruvate: step 2/4.</text>
</comment>
<comment type="similarity">
    <text evidence="1">Belongs to the ketol-acid reductoisomerase family.</text>
</comment>
<protein>
    <recommendedName>
        <fullName evidence="1">Ketol-acid reductoisomerase (NADP(+))</fullName>
        <shortName evidence="1">KARI</shortName>
        <ecNumber evidence="1">1.1.1.86</ecNumber>
    </recommendedName>
    <alternativeName>
        <fullName evidence="1">Acetohydroxy-acid isomeroreductase</fullName>
        <shortName evidence="1">AHIR</shortName>
    </alternativeName>
    <alternativeName>
        <fullName evidence="1">Alpha-keto-beta-hydroxylacyl reductoisomerase</fullName>
    </alternativeName>
    <alternativeName>
        <fullName evidence="1">Ketol-acid reductoisomerase type 1</fullName>
    </alternativeName>
    <alternativeName>
        <fullName evidence="1">Ketol-acid reductoisomerase type I</fullName>
    </alternativeName>
</protein>
<feature type="chain" id="PRO_1000060225" description="Ketol-acid reductoisomerase (NADP(+))">
    <location>
        <begin position="1"/>
        <end position="340"/>
    </location>
</feature>
<feature type="domain" description="KARI N-terminal Rossmann" evidence="2">
    <location>
        <begin position="3"/>
        <end position="183"/>
    </location>
</feature>
<feature type="domain" description="KARI C-terminal knotted" evidence="3">
    <location>
        <begin position="184"/>
        <end position="329"/>
    </location>
</feature>
<feature type="active site" evidence="1">
    <location>
        <position position="109"/>
    </location>
</feature>
<feature type="binding site" evidence="1">
    <location>
        <begin position="26"/>
        <end position="29"/>
    </location>
    <ligand>
        <name>NADP(+)</name>
        <dbReference type="ChEBI" id="CHEBI:58349"/>
    </ligand>
</feature>
<feature type="binding site" evidence="1">
    <location>
        <position position="49"/>
    </location>
    <ligand>
        <name>NADP(+)</name>
        <dbReference type="ChEBI" id="CHEBI:58349"/>
    </ligand>
</feature>
<feature type="binding site" evidence="1">
    <location>
        <position position="54"/>
    </location>
    <ligand>
        <name>NADP(+)</name>
        <dbReference type="ChEBI" id="CHEBI:58349"/>
    </ligand>
</feature>
<feature type="binding site" evidence="1">
    <location>
        <begin position="84"/>
        <end position="87"/>
    </location>
    <ligand>
        <name>NADP(+)</name>
        <dbReference type="ChEBI" id="CHEBI:58349"/>
    </ligand>
</feature>
<feature type="binding site" evidence="1">
    <location>
        <position position="135"/>
    </location>
    <ligand>
        <name>NADP(+)</name>
        <dbReference type="ChEBI" id="CHEBI:58349"/>
    </ligand>
</feature>
<feature type="binding site" evidence="1">
    <location>
        <position position="192"/>
    </location>
    <ligand>
        <name>Mg(2+)</name>
        <dbReference type="ChEBI" id="CHEBI:18420"/>
        <label>1</label>
    </ligand>
</feature>
<feature type="binding site" evidence="1">
    <location>
        <position position="192"/>
    </location>
    <ligand>
        <name>Mg(2+)</name>
        <dbReference type="ChEBI" id="CHEBI:18420"/>
        <label>2</label>
    </ligand>
</feature>
<feature type="binding site" evidence="1">
    <location>
        <position position="196"/>
    </location>
    <ligand>
        <name>Mg(2+)</name>
        <dbReference type="ChEBI" id="CHEBI:18420"/>
        <label>1</label>
    </ligand>
</feature>
<feature type="binding site" evidence="1">
    <location>
        <position position="228"/>
    </location>
    <ligand>
        <name>Mg(2+)</name>
        <dbReference type="ChEBI" id="CHEBI:18420"/>
        <label>2</label>
    </ligand>
</feature>
<feature type="binding site" evidence="1">
    <location>
        <position position="232"/>
    </location>
    <ligand>
        <name>Mg(2+)</name>
        <dbReference type="ChEBI" id="CHEBI:18420"/>
        <label>2</label>
    </ligand>
</feature>
<feature type="binding site" evidence="1">
    <location>
        <position position="253"/>
    </location>
    <ligand>
        <name>substrate</name>
    </ligand>
</feature>
<proteinExistence type="inferred from homology"/>
<gene>
    <name evidence="1" type="primary">ilvC</name>
    <name type="ordered locus">Abu_0237</name>
</gene>
<keyword id="KW-0028">Amino-acid biosynthesis</keyword>
<keyword id="KW-0100">Branched-chain amino acid biosynthesis</keyword>
<keyword id="KW-0460">Magnesium</keyword>
<keyword id="KW-0479">Metal-binding</keyword>
<keyword id="KW-0521">NADP</keyword>
<keyword id="KW-0560">Oxidoreductase</keyword>
<keyword id="KW-1185">Reference proteome</keyword>
<name>ILVC_ALIB4</name>
<accession>A8ERD8</accession>
<sequence length="340" mass="37099">MAINVFYDKDCNIDLIKSKKVAMIGFGSQGHAHAENLRDSGVEVIVGLRKDGSSWKKAEAKGFKVLTVAEATKIADVVMILLPDENQADIYANEIKPNLKDGAYLAFGHGFNIHYKRIIPCSKTNVMMIAPKAPGHTVRSEFVKGGGIPDLIAVHQDASGDTKQVALAYASAIGGGRTGIIETTFKDETETDLFGEQAVLCGGATALVQAGFETLVEAGYEPEMAYFECLHELKLIVDLMYEGGIADMRYSISNTAEYGDYVSGPRVINDESRAAMKQILKEIQNGVFAKDFILEGQAGYPRMNAERAYTKASLLEQTGVKLRNMMPWIASKKIVNQETN</sequence>